<gene>
    <name evidence="1" type="primary">yacG</name>
    <name type="ordered locus">PM0089</name>
</gene>
<sequence length="67" mass="7797">MTDDIFSVPCPICQKQVEWSDKSPFRPFCCKRCQLIDLGEWAAEEKAIPCESADFAMNDEQEDWRAH</sequence>
<organism>
    <name type="scientific">Pasteurella multocida (strain Pm70)</name>
    <dbReference type="NCBI Taxonomy" id="272843"/>
    <lineage>
        <taxon>Bacteria</taxon>
        <taxon>Pseudomonadati</taxon>
        <taxon>Pseudomonadota</taxon>
        <taxon>Gammaproteobacteria</taxon>
        <taxon>Pasteurellales</taxon>
        <taxon>Pasteurellaceae</taxon>
        <taxon>Pasteurella</taxon>
    </lineage>
</organism>
<keyword id="KW-0479">Metal-binding</keyword>
<keyword id="KW-1185">Reference proteome</keyword>
<keyword id="KW-0862">Zinc</keyword>
<name>YACG_PASMU</name>
<dbReference type="EMBL" id="AE004439">
    <property type="protein sequence ID" value="AAK02173.1"/>
    <property type="status" value="ALT_INIT"/>
    <property type="molecule type" value="Genomic_DNA"/>
</dbReference>
<dbReference type="RefSeq" id="WP_005719879.1">
    <property type="nucleotide sequence ID" value="NC_002663.1"/>
</dbReference>
<dbReference type="SMR" id="Q9CPF4"/>
<dbReference type="STRING" id="272843.PM0089"/>
<dbReference type="EnsemblBacteria" id="AAK02173">
    <property type="protein sequence ID" value="AAK02173"/>
    <property type="gene ID" value="PM0089"/>
</dbReference>
<dbReference type="KEGG" id="pmu:PM0089"/>
<dbReference type="HOGENOM" id="CLU_178280_3_1_6"/>
<dbReference type="OrthoDB" id="9809663at2"/>
<dbReference type="Proteomes" id="UP000000809">
    <property type="component" value="Chromosome"/>
</dbReference>
<dbReference type="GO" id="GO:0008657">
    <property type="term" value="F:DNA topoisomerase type II (double strand cut, ATP-hydrolyzing) inhibitor activity"/>
    <property type="evidence" value="ECO:0007669"/>
    <property type="project" value="UniProtKB-UniRule"/>
</dbReference>
<dbReference type="GO" id="GO:0008270">
    <property type="term" value="F:zinc ion binding"/>
    <property type="evidence" value="ECO:0007669"/>
    <property type="project" value="UniProtKB-UniRule"/>
</dbReference>
<dbReference type="GO" id="GO:0006355">
    <property type="term" value="P:regulation of DNA-templated transcription"/>
    <property type="evidence" value="ECO:0007669"/>
    <property type="project" value="InterPro"/>
</dbReference>
<dbReference type="Gene3D" id="3.30.50.10">
    <property type="entry name" value="Erythroid Transcription Factor GATA-1, subunit A"/>
    <property type="match status" value="1"/>
</dbReference>
<dbReference type="HAMAP" id="MF_00649">
    <property type="entry name" value="DNA_gyrase_inhibitor_YacG"/>
    <property type="match status" value="1"/>
</dbReference>
<dbReference type="InterPro" id="IPR005584">
    <property type="entry name" value="DNA_gyrase_inhibitor_YacG"/>
</dbReference>
<dbReference type="InterPro" id="IPR013088">
    <property type="entry name" value="Znf_NHR/GATA"/>
</dbReference>
<dbReference type="NCBIfam" id="NF001638">
    <property type="entry name" value="PRK00418.1"/>
    <property type="match status" value="1"/>
</dbReference>
<dbReference type="PANTHER" id="PTHR36150">
    <property type="entry name" value="DNA GYRASE INHIBITOR YACG"/>
    <property type="match status" value="1"/>
</dbReference>
<dbReference type="PANTHER" id="PTHR36150:SF1">
    <property type="entry name" value="DNA GYRASE INHIBITOR YACG"/>
    <property type="match status" value="1"/>
</dbReference>
<dbReference type="Pfam" id="PF03884">
    <property type="entry name" value="YacG"/>
    <property type="match status" value="1"/>
</dbReference>
<dbReference type="SUPFAM" id="SSF57716">
    <property type="entry name" value="Glucocorticoid receptor-like (DNA-binding domain)"/>
    <property type="match status" value="1"/>
</dbReference>
<feature type="chain" id="PRO_0000211712" description="DNA gyrase inhibitor YacG">
    <location>
        <begin position="1"/>
        <end position="67"/>
    </location>
</feature>
<feature type="binding site" evidence="1">
    <location>
        <position position="10"/>
    </location>
    <ligand>
        <name>Zn(2+)</name>
        <dbReference type="ChEBI" id="CHEBI:29105"/>
    </ligand>
</feature>
<feature type="binding site" evidence="1">
    <location>
        <position position="13"/>
    </location>
    <ligand>
        <name>Zn(2+)</name>
        <dbReference type="ChEBI" id="CHEBI:29105"/>
    </ligand>
</feature>
<feature type="binding site" evidence="1">
    <location>
        <position position="29"/>
    </location>
    <ligand>
        <name>Zn(2+)</name>
        <dbReference type="ChEBI" id="CHEBI:29105"/>
    </ligand>
</feature>
<feature type="binding site" evidence="1">
    <location>
        <position position="33"/>
    </location>
    <ligand>
        <name>Zn(2+)</name>
        <dbReference type="ChEBI" id="CHEBI:29105"/>
    </ligand>
</feature>
<comment type="function">
    <text evidence="1">Inhibits all the catalytic activities of DNA gyrase by preventing its interaction with DNA. Acts by binding directly to the C-terminal domain of GyrB, which probably disrupts DNA binding by the gyrase.</text>
</comment>
<comment type="cofactor">
    <cofactor evidence="1">
        <name>Zn(2+)</name>
        <dbReference type="ChEBI" id="CHEBI:29105"/>
    </cofactor>
    <text evidence="1">Binds 1 zinc ion.</text>
</comment>
<comment type="subunit">
    <text evidence="1">Interacts with GyrB.</text>
</comment>
<comment type="similarity">
    <text evidence="1">Belongs to the DNA gyrase inhibitor YacG family.</text>
</comment>
<comment type="sequence caution" evidence="2">
    <conflict type="erroneous initiation">
        <sequence resource="EMBL-CDS" id="AAK02173"/>
    </conflict>
    <text>Extended N-terminus.</text>
</comment>
<accession>Q9CPF4</accession>
<reference key="1">
    <citation type="journal article" date="2001" name="Proc. Natl. Acad. Sci. U.S.A.">
        <title>Complete genomic sequence of Pasteurella multocida Pm70.</title>
        <authorList>
            <person name="May B.J."/>
            <person name="Zhang Q."/>
            <person name="Li L.L."/>
            <person name="Paustian M.L."/>
            <person name="Whittam T.S."/>
            <person name="Kapur V."/>
        </authorList>
    </citation>
    <scope>NUCLEOTIDE SEQUENCE [LARGE SCALE GENOMIC DNA]</scope>
    <source>
        <strain>Pm70</strain>
    </source>
</reference>
<protein>
    <recommendedName>
        <fullName evidence="1">DNA gyrase inhibitor YacG</fullName>
    </recommendedName>
</protein>
<evidence type="ECO:0000255" key="1">
    <source>
        <dbReference type="HAMAP-Rule" id="MF_00649"/>
    </source>
</evidence>
<evidence type="ECO:0000305" key="2"/>
<proteinExistence type="inferred from homology"/>